<gene>
    <name type="primary">mt:ND4</name>
    <name type="synonym">ND4</name>
</gene>
<sequence>MLKIILFLLFLTPVCFINNMYWMVQIMLFFISFIFLLMNNFMNYWSEISYFLGCDMLSYGLVLLSLWICSLMLLASESINKYNNYKNLFLLNIVILLLLLVLTFSSMSLFMFYLFFESSLIPTLFLILGWGYQPERLQAGVYLLFYTLLVSLPMLIGIFYVMNKTGSMNFYLMNNFMFNYDLLYFCLLCAFLVKMPMFLVHLWLPKAHVEAPVSGSMILAGIMLKLGGYGLLRVINFLQLMNLKYSFVWISISLVGGVLMSLVCLRQTDLKALIAYSSVAHMGIVLAGLLTMTYWGLCGSYTLMIAHGLCSSGLFCLANVSYERLGSRSMLINKGLLNFMPAMTLWWFLLSSANMAAPPTLNLLGEISLLNSIVSWSWISMIMLSFLSFFSAAYTLYLYSFSQHGKLFSGVYSFSSGKIREYLLMLLHWLPLNLLILKSESCILWL</sequence>
<organism>
    <name type="scientific">Drosophila yakuba</name>
    <name type="common">Fruit fly</name>
    <dbReference type="NCBI Taxonomy" id="7245"/>
    <lineage>
        <taxon>Eukaryota</taxon>
        <taxon>Metazoa</taxon>
        <taxon>Ecdysozoa</taxon>
        <taxon>Arthropoda</taxon>
        <taxon>Hexapoda</taxon>
        <taxon>Insecta</taxon>
        <taxon>Pterygota</taxon>
        <taxon>Neoptera</taxon>
        <taxon>Endopterygota</taxon>
        <taxon>Diptera</taxon>
        <taxon>Brachycera</taxon>
        <taxon>Muscomorpha</taxon>
        <taxon>Ephydroidea</taxon>
        <taxon>Drosophilidae</taxon>
        <taxon>Drosophila</taxon>
        <taxon>Sophophora</taxon>
    </lineage>
</organism>
<reference key="1">
    <citation type="journal article" date="1984" name="Nucleic Acids Res.">
        <title>Sequence and arrangement of the genes for cytochrome b, URF1, URF4L, URF4, URF5, URF6 and five tRNAs in Drosophila mitochondrial DNA.</title>
        <authorList>
            <person name="Clary D.O."/>
            <person name="Wahleithner J.A."/>
            <person name="Wolstenholme D.R."/>
        </authorList>
    </citation>
    <scope>NUCLEOTIDE SEQUENCE [GENOMIC DNA]</scope>
</reference>
<reference key="2">
    <citation type="journal article" date="1985" name="J. Mol. Evol.">
        <title>The mitochondrial DNA molecular of Drosophila yakuba: nucleotide sequence, gene organization, and genetic code.</title>
        <authorList>
            <person name="Clary D.O."/>
            <person name="Wolstenholme D.R."/>
        </authorList>
    </citation>
    <scope>NUCLEOTIDE SEQUENCE [LARGE SCALE GENOMIC DNA]</scope>
    <source>
        <strain>2317.6 Ivory Coast</strain>
    </source>
</reference>
<name>NU4M_DROYA</name>
<geneLocation type="mitochondrion"/>
<protein>
    <recommendedName>
        <fullName>NADH-ubiquinone oxidoreductase chain 4</fullName>
        <ecNumber>7.1.1.2</ecNumber>
    </recommendedName>
    <alternativeName>
        <fullName>NADH dehydrogenase subunit 4</fullName>
    </alternativeName>
</protein>
<feature type="chain" id="PRO_0000117931" description="NADH-ubiquinone oxidoreductase chain 4">
    <location>
        <begin position="1"/>
        <end position="446"/>
    </location>
</feature>
<feature type="transmembrane region" description="Helical" evidence="2">
    <location>
        <begin position="4"/>
        <end position="24"/>
    </location>
</feature>
<feature type="transmembrane region" description="Helical" evidence="2">
    <location>
        <begin position="56"/>
        <end position="76"/>
    </location>
</feature>
<feature type="transmembrane region" description="Helical" evidence="2">
    <location>
        <begin position="93"/>
        <end position="113"/>
    </location>
</feature>
<feature type="transmembrane region" description="Helical" evidence="2">
    <location>
        <begin position="114"/>
        <end position="134"/>
    </location>
</feature>
<feature type="transmembrane region" description="Helical" evidence="2">
    <location>
        <begin position="141"/>
        <end position="161"/>
    </location>
</feature>
<feature type="transmembrane region" description="Helical" evidence="2">
    <location>
        <begin position="182"/>
        <end position="202"/>
    </location>
</feature>
<feature type="transmembrane region" description="Helical" evidence="2">
    <location>
        <begin position="212"/>
        <end position="232"/>
    </location>
</feature>
<feature type="transmembrane region" description="Helical" evidence="2">
    <location>
        <begin position="245"/>
        <end position="265"/>
    </location>
</feature>
<feature type="transmembrane region" description="Helical" evidence="2">
    <location>
        <begin position="272"/>
        <end position="292"/>
    </location>
</feature>
<feature type="transmembrane region" description="Helical" evidence="2">
    <location>
        <begin position="297"/>
        <end position="317"/>
    </location>
</feature>
<feature type="transmembrane region" description="Helical" evidence="2">
    <location>
        <begin position="330"/>
        <end position="350"/>
    </location>
</feature>
<feature type="transmembrane region" description="Helical" evidence="2">
    <location>
        <begin position="373"/>
        <end position="393"/>
    </location>
</feature>
<feature type="transmembrane region" description="Helical" evidence="2">
    <location>
        <begin position="426"/>
        <end position="446"/>
    </location>
</feature>
<keyword id="KW-0249">Electron transport</keyword>
<keyword id="KW-0472">Membrane</keyword>
<keyword id="KW-0496">Mitochondrion</keyword>
<keyword id="KW-0520">NAD</keyword>
<keyword id="KW-0679">Respiratory chain</keyword>
<keyword id="KW-1278">Translocase</keyword>
<keyword id="KW-0812">Transmembrane</keyword>
<keyword id="KW-1133">Transmembrane helix</keyword>
<keyword id="KW-0813">Transport</keyword>
<keyword id="KW-0830">Ubiquinone</keyword>
<dbReference type="EC" id="7.1.1.2"/>
<dbReference type="EMBL" id="X03240">
    <property type="protein sequence ID" value="CAA26993.1"/>
    <property type="molecule type" value="Genomic_DNA"/>
</dbReference>
<dbReference type="PIR" id="I25797">
    <property type="entry name" value="I25797"/>
</dbReference>
<dbReference type="RefSeq" id="NP_006910.1">
    <property type="nucleotide sequence ID" value="NC_001322.1"/>
</dbReference>
<dbReference type="SMR" id="P07707"/>
<dbReference type="EnsemblMetazoa" id="GeneID_807624_df_mr">
    <property type="protein sequence ID" value="NP_006910.1"/>
    <property type="gene ID" value="GeneID_807624"/>
</dbReference>
<dbReference type="GeneID" id="807624"/>
<dbReference type="KEGG" id="dya:ND4"/>
<dbReference type="CTD" id="4538"/>
<dbReference type="OrthoDB" id="564260at2759"/>
<dbReference type="Proteomes" id="UP000002282">
    <property type="component" value="Mitochondrion"/>
</dbReference>
<dbReference type="GO" id="GO:0031966">
    <property type="term" value="C:mitochondrial membrane"/>
    <property type="evidence" value="ECO:0007669"/>
    <property type="project" value="UniProtKB-SubCell"/>
</dbReference>
<dbReference type="GO" id="GO:0045271">
    <property type="term" value="C:respiratory chain complex I"/>
    <property type="evidence" value="ECO:0007669"/>
    <property type="project" value="EnsemblMetazoa"/>
</dbReference>
<dbReference type="GO" id="GO:0008137">
    <property type="term" value="F:NADH dehydrogenase (ubiquinone) activity"/>
    <property type="evidence" value="ECO:0007669"/>
    <property type="project" value="UniProtKB-EC"/>
</dbReference>
<dbReference type="GO" id="GO:0048039">
    <property type="term" value="F:ubiquinone binding"/>
    <property type="evidence" value="ECO:0007669"/>
    <property type="project" value="TreeGrafter"/>
</dbReference>
<dbReference type="GO" id="GO:0042773">
    <property type="term" value="P:ATP synthesis coupled electron transport"/>
    <property type="evidence" value="ECO:0007669"/>
    <property type="project" value="InterPro"/>
</dbReference>
<dbReference type="GO" id="GO:0015990">
    <property type="term" value="P:electron transport coupled proton transport"/>
    <property type="evidence" value="ECO:0007669"/>
    <property type="project" value="TreeGrafter"/>
</dbReference>
<dbReference type="InterPro" id="IPR000260">
    <property type="entry name" value="NADH4_N"/>
</dbReference>
<dbReference type="InterPro" id="IPR003918">
    <property type="entry name" value="NADH_UbQ_OxRdtase"/>
</dbReference>
<dbReference type="InterPro" id="IPR001750">
    <property type="entry name" value="ND/Mrp_TM"/>
</dbReference>
<dbReference type="PANTHER" id="PTHR43507">
    <property type="entry name" value="NADH-UBIQUINONE OXIDOREDUCTASE CHAIN 4"/>
    <property type="match status" value="1"/>
</dbReference>
<dbReference type="PANTHER" id="PTHR43507:SF20">
    <property type="entry name" value="NADH-UBIQUINONE OXIDOREDUCTASE CHAIN 4"/>
    <property type="match status" value="1"/>
</dbReference>
<dbReference type="Pfam" id="PF01059">
    <property type="entry name" value="Oxidored_q5_N"/>
    <property type="match status" value="1"/>
</dbReference>
<dbReference type="Pfam" id="PF00361">
    <property type="entry name" value="Proton_antipo_M"/>
    <property type="match status" value="1"/>
</dbReference>
<dbReference type="PRINTS" id="PR01437">
    <property type="entry name" value="NUOXDRDTASE4"/>
</dbReference>
<accession>P07707</accession>
<evidence type="ECO:0000250" key="1"/>
<evidence type="ECO:0000255" key="2"/>
<evidence type="ECO:0000305" key="3"/>
<proteinExistence type="inferred from homology"/>
<comment type="function">
    <text evidence="1">Core subunit of the mitochondrial membrane respiratory chain NADH dehydrogenase (Complex I) that is believed to belong to the minimal assembly required for catalysis. Complex I functions in the transfer of electrons from NADH to the respiratory chain. The immediate electron acceptor for the enzyme is believed to be ubiquinone (By similarity).</text>
</comment>
<comment type="catalytic activity">
    <reaction>
        <text>a ubiquinone + NADH + 5 H(+)(in) = a ubiquinol + NAD(+) + 4 H(+)(out)</text>
        <dbReference type="Rhea" id="RHEA:29091"/>
        <dbReference type="Rhea" id="RHEA-COMP:9565"/>
        <dbReference type="Rhea" id="RHEA-COMP:9566"/>
        <dbReference type="ChEBI" id="CHEBI:15378"/>
        <dbReference type="ChEBI" id="CHEBI:16389"/>
        <dbReference type="ChEBI" id="CHEBI:17976"/>
        <dbReference type="ChEBI" id="CHEBI:57540"/>
        <dbReference type="ChEBI" id="CHEBI:57945"/>
        <dbReference type="EC" id="7.1.1.2"/>
    </reaction>
</comment>
<comment type="subcellular location">
    <subcellularLocation>
        <location evidence="1">Mitochondrion membrane</location>
        <topology evidence="1">Multi-pass membrane protein</topology>
    </subcellularLocation>
</comment>
<comment type="similarity">
    <text evidence="3">Belongs to the complex I subunit 4 family.</text>
</comment>